<evidence type="ECO:0000250" key="1"/>
<evidence type="ECO:0000305" key="2"/>
<protein>
    <recommendedName>
        <fullName>Putative DNA transfer protein p35</fullName>
    </recommendedName>
</protein>
<feature type="chain" id="PRO_0000077763" description="Putative DNA transfer protein p35">
    <location>
        <begin position="1"/>
        <end position="625"/>
    </location>
</feature>
<proteinExistence type="inferred from homology"/>
<accession>Q9T1R3</accession>
<dbReference type="EMBL" id="AF157835">
    <property type="protein sequence ID" value="AAF03978.1"/>
    <property type="molecule type" value="Genomic_DNA"/>
</dbReference>
<dbReference type="RefSeq" id="NP_050996.1">
    <property type="nucleotide sequence ID" value="NC_000935.1"/>
</dbReference>
<dbReference type="KEGG" id="vg:1262329"/>
<dbReference type="Proteomes" id="UP000000853">
    <property type="component" value="Genome"/>
</dbReference>
<dbReference type="GO" id="GO:0046718">
    <property type="term" value="P:symbiont entry into host cell"/>
    <property type="evidence" value="ECO:0007669"/>
    <property type="project" value="UniProtKB-KW"/>
</dbReference>
<sequence length="625" mass="66878">MKVTAKGKTFVFPDGTRIDDIGEAIDEYFAGQSTQSGEIANHHDNNALSSAQMANLDIPTDEILAYHDKQNPHESSQIQDPFTEAGRGLVNIPFDVLQGGANLINALSQAVGGGRLLGDIYRPVDRPADPYALAGETVGDYLIPGLGAAGKMMVGSLADASNQRGDFAQNAATNAGVNLAAQGLLSAAAKGVGKGITALKGEIAPEAAQKMMTAESMGVAPMTSDMLPPQNALTRGLTQGGEGALLGTGARRAAQQTTRRKLVSDYLDRFGEYNPDTVVKSLTSNLKSRKDAAGRVIDDITQKMGVNPVETTHAVNAIDTVLPRLEKLGTSVDQNLLNTLRNLKGELTQQGGVDFDLLKQHRTAFRSNVQGDALVFPNHAKAITNRVENAMTKDLRNSVSKSLSPQEAATYLKANSDYENVYNKVLNKRIARNLNKATREATPELINSVVYSRNASDIKRIWPALDNTGKDAVRAAYIAKIAETVGDSPAKFMTQISKLKKQAGGEIYNTVFSARHMKELEALNDVLQTTQRADTANIVTQTGQALANPLRIGAAFGSGGVSLAGEVGFGMVMRMYESRPVRNALLRLANKKTGTPAYERALNNAVKLFRPIIAASSSQQQSETQ</sequence>
<organism>
    <name type="scientific">Acyrthosiphon pisum secondary endosymbiont phage 1</name>
    <name type="common">Bacteriophage APSE-1</name>
    <dbReference type="NCBI Taxonomy" id="2682836"/>
    <lineage>
        <taxon>Viruses</taxon>
        <taxon>Duplodnaviria</taxon>
        <taxon>Heunggongvirae</taxon>
        <taxon>Uroviricota</taxon>
        <taxon>Caudoviricetes</taxon>
        <taxon>Sendosyvirus</taxon>
        <taxon>Sendosyvirus APSE1</taxon>
    </lineage>
</organism>
<name>VP35_BPAPS</name>
<organismHost>
    <name type="scientific">Escherichia coli</name>
    <dbReference type="NCBI Taxonomy" id="562"/>
</organismHost>
<gene>
    <name type="primary">35</name>
</gene>
<reference key="1">
    <citation type="journal article" date="1999" name="Virology">
        <title>Isolation and characterization of APSE-1, a bacteriophage infecting the secondary endosymbiont of acyrthosiphon pisum.</title>
        <authorList>
            <person name="van der Wilk F."/>
            <person name="Dullemans A.M."/>
            <person name="Verbeek M."/>
            <person name="van den Heuvel J.F.J.M."/>
        </authorList>
    </citation>
    <scope>NUCLEOTIDE SEQUENCE [LARGE SCALE GENOMIC DNA]</scope>
</reference>
<comment type="function">
    <text evidence="1">Component of the phage injection machinery. Required for injection of the phage DNA into the host (By similarity).</text>
</comment>
<comment type="similarity">
    <text evidence="2">To phage P22 gp16.</text>
</comment>
<keyword id="KW-1185">Reference proteome</keyword>
<keyword id="KW-1171">Viral genome ejection through host cell envelope</keyword>
<keyword id="KW-1162">Viral penetration into host cytoplasm</keyword>
<keyword id="KW-1160">Virus entry into host cell</keyword>